<organism>
    <name type="scientific">Mycobacterium tuberculosis (strain ATCC 25618 / H37Rv)</name>
    <dbReference type="NCBI Taxonomy" id="83332"/>
    <lineage>
        <taxon>Bacteria</taxon>
        <taxon>Bacillati</taxon>
        <taxon>Actinomycetota</taxon>
        <taxon>Actinomycetes</taxon>
        <taxon>Mycobacteriales</taxon>
        <taxon>Mycobacteriaceae</taxon>
        <taxon>Mycobacterium</taxon>
        <taxon>Mycobacterium tuberculosis complex</taxon>
    </lineage>
</organism>
<name>ESXJ_MYCTU</name>
<keyword id="KW-1185">Reference proteome</keyword>
<keyword id="KW-0964">Secreted</keyword>
<gene>
    <name evidence="3" type="primary">esxJ</name>
    <name type="ordered locus">Rv1038c</name>
    <name type="ORF">MTCY10G2.11</name>
</gene>
<feature type="chain" id="PRO_0000167802" description="ESAT-6-like protein EsxJ">
    <location>
        <begin position="1"/>
        <end position="98"/>
    </location>
</feature>
<reference key="1">
    <citation type="journal article" date="1998" name="Nature">
        <title>Deciphering the biology of Mycobacterium tuberculosis from the complete genome sequence.</title>
        <authorList>
            <person name="Cole S.T."/>
            <person name="Brosch R."/>
            <person name="Parkhill J."/>
            <person name="Garnier T."/>
            <person name="Churcher C.M."/>
            <person name="Harris D.E."/>
            <person name="Gordon S.V."/>
            <person name="Eiglmeier K."/>
            <person name="Gas S."/>
            <person name="Barry C.E. III"/>
            <person name="Tekaia F."/>
            <person name="Badcock K."/>
            <person name="Basham D."/>
            <person name="Brown D."/>
            <person name="Chillingworth T."/>
            <person name="Connor R."/>
            <person name="Davies R.M."/>
            <person name="Devlin K."/>
            <person name="Feltwell T."/>
            <person name="Gentles S."/>
            <person name="Hamlin N."/>
            <person name="Holroyd S."/>
            <person name="Hornsby T."/>
            <person name="Jagels K."/>
            <person name="Krogh A."/>
            <person name="McLean J."/>
            <person name="Moule S."/>
            <person name="Murphy L.D."/>
            <person name="Oliver S."/>
            <person name="Osborne J."/>
            <person name="Quail M.A."/>
            <person name="Rajandream M.A."/>
            <person name="Rogers J."/>
            <person name="Rutter S."/>
            <person name="Seeger K."/>
            <person name="Skelton S."/>
            <person name="Squares S."/>
            <person name="Squares R."/>
            <person name="Sulston J.E."/>
            <person name="Taylor K."/>
            <person name="Whitehead S."/>
            <person name="Barrell B.G."/>
        </authorList>
    </citation>
    <scope>NUCLEOTIDE SEQUENCE [LARGE SCALE GENOMIC DNA]</scope>
    <source>
        <strain>ATCC 25618 / H37Rv</strain>
    </source>
</reference>
<reference key="2">
    <citation type="journal article" date="2003" name="Microbes Infect.">
        <title>Comparative proteome analysis of culture supernatant proteins of Mycobacterium tuberculosis H37Rv and H37Ra.</title>
        <authorList>
            <person name="He X.Y."/>
            <person name="Zhuang Y.H."/>
            <person name="Zhang X.G."/>
            <person name="Li G.L."/>
        </authorList>
    </citation>
    <scope>IDENTIFICATION BY MASS SPECTROMETRY</scope>
    <scope>SUBCELLULAR LOCATION</scope>
    <source>
        <strain>ATCC 27294 / TMC 102 / H37Rv</strain>
    </source>
</reference>
<reference key="3">
    <citation type="journal article" date="2009" name="PLoS Pathog.">
        <title>Systematic genetic nomenclature for type VII secretion systems.</title>
        <authorList>
            <person name="Bitter W."/>
            <person name="Houben E.N."/>
            <person name="Bottai D."/>
            <person name="Brodin P."/>
            <person name="Brown E.J."/>
            <person name="Cox J.S."/>
            <person name="Derbyshire K."/>
            <person name="Fortune S.M."/>
            <person name="Gao L.Y."/>
            <person name="Liu J."/>
            <person name="Gey van Pittius N.C."/>
            <person name="Pym A.S."/>
            <person name="Rubin E.J."/>
            <person name="Sherman D.R."/>
            <person name="Cole S.T."/>
            <person name="Brosch R."/>
        </authorList>
    </citation>
    <scope>NOMENCLATURE</scope>
</reference>
<reference key="4">
    <citation type="journal article" date="2011" name="Front. Microbiol.">
        <title>Mycobacterium tuberculosis RNA expression patterns in sputum bacteria indicate secreted Esx factors contributing to growth are highly expressed in active disease.</title>
        <authorList>
            <person name="Bukka A."/>
            <person name="Price C.T."/>
            <person name="Kernodle D.S."/>
            <person name="Graham J.E."/>
        </authorList>
    </citation>
    <scope>INDUCTION</scope>
    <scope>DISRUPTION PHENOTYPE</scope>
    <source>
        <strain>ATCC 25618 / H37Rv</strain>
    </source>
</reference>
<accession>P9WNJ9</accession>
<accession>L0T747</accession>
<accession>P96363</accession>
<proteinExistence type="evidence at protein level"/>
<comment type="subcellular location">
    <subcellularLocation>
        <location evidence="1">Secreted</location>
    </subcellularLocation>
    <text evidence="5">Probably secreted via the ESX-5 / type VII secretion system (T7SS).</text>
</comment>
<comment type="induction">
    <text evidence="2">Differentially expressed under different growth conditions.</text>
</comment>
<comment type="disruption phenotype">
    <text evidence="2">EsxJI deletion mutant shows extremely slow growth in broth cultures.</text>
</comment>
<comment type="similarity">
    <text evidence="5">Belongs to the WXG100 family. CFP-10 subfamily.</text>
</comment>
<protein>
    <recommendedName>
        <fullName evidence="4">ESAT-6-like protein EsxJ</fullName>
    </recommendedName>
</protein>
<evidence type="ECO:0000269" key="1">
    <source>
    </source>
</evidence>
<evidence type="ECO:0000269" key="2">
    <source>
    </source>
</evidence>
<evidence type="ECO:0000303" key="3">
    <source>
    </source>
</evidence>
<evidence type="ECO:0000305" key="4"/>
<evidence type="ECO:0000305" key="5">
    <source>
    </source>
</evidence>
<sequence>MASRFMTDPHAMRDMAGRFEVHAQTVEDEARRMWASAQNISGAGWSGMAEATSLDTMTQMNQAFRNIVNMLHGVRDGLVRDANNYEQQEQASQQILSS</sequence>
<dbReference type="EMBL" id="AL123456">
    <property type="protein sequence ID" value="CCP43789.1"/>
    <property type="molecule type" value="Genomic_DNA"/>
</dbReference>
<dbReference type="PIR" id="A70625">
    <property type="entry name" value="A70625"/>
</dbReference>
<dbReference type="RefSeq" id="NP_215554.1">
    <property type="nucleotide sequence ID" value="NC_000962.3"/>
</dbReference>
<dbReference type="RefSeq" id="WP_003405345.1">
    <property type="nucleotide sequence ID" value="NZ_KK339370.1"/>
</dbReference>
<dbReference type="SMR" id="P9WNJ9"/>
<dbReference type="STRING" id="83332.Rv1038c"/>
<dbReference type="PaxDb" id="83332-Rv1038c"/>
<dbReference type="GeneID" id="45425009"/>
<dbReference type="GeneID" id="888372"/>
<dbReference type="KEGG" id="mtu:Rv1038c"/>
<dbReference type="KEGG" id="mtv:RVBD_1038c"/>
<dbReference type="TubercuList" id="Rv1038c"/>
<dbReference type="eggNOG" id="COG4842">
    <property type="taxonomic scope" value="Bacteria"/>
</dbReference>
<dbReference type="InParanoid" id="P9WNJ9"/>
<dbReference type="OrthoDB" id="4739539at2"/>
<dbReference type="PhylomeDB" id="P9WNJ9"/>
<dbReference type="Proteomes" id="UP000001584">
    <property type="component" value="Chromosome"/>
</dbReference>
<dbReference type="GO" id="GO:0005576">
    <property type="term" value="C:extracellular region"/>
    <property type="evidence" value="ECO:0007669"/>
    <property type="project" value="UniProtKB-SubCell"/>
</dbReference>
<dbReference type="GO" id="GO:0009274">
    <property type="term" value="C:peptidoglycan-based cell wall"/>
    <property type="evidence" value="ECO:0007005"/>
    <property type="project" value="MTBBASE"/>
</dbReference>
<dbReference type="GO" id="GO:0005886">
    <property type="term" value="C:plasma membrane"/>
    <property type="evidence" value="ECO:0007005"/>
    <property type="project" value="MTBBASE"/>
</dbReference>
<dbReference type="FunFam" id="1.10.287.1060:FF:000006">
    <property type="entry name" value="ESAT-6-like protein"/>
    <property type="match status" value="1"/>
</dbReference>
<dbReference type="Gene3D" id="1.10.287.1060">
    <property type="entry name" value="ESAT-6-like"/>
    <property type="match status" value="1"/>
</dbReference>
<dbReference type="InterPro" id="IPR036689">
    <property type="entry name" value="ESAT-6-like_sf"/>
</dbReference>
<dbReference type="InterPro" id="IPR010310">
    <property type="entry name" value="T7SS_ESAT-6-like"/>
</dbReference>
<dbReference type="NCBIfam" id="TIGR03930">
    <property type="entry name" value="WXG100_ESAT6"/>
    <property type="match status" value="1"/>
</dbReference>
<dbReference type="Pfam" id="PF06013">
    <property type="entry name" value="WXG100"/>
    <property type="match status" value="1"/>
</dbReference>
<dbReference type="SUPFAM" id="SSF140453">
    <property type="entry name" value="EsxAB dimer-like"/>
    <property type="match status" value="1"/>
</dbReference>